<name>DEN2A_MOUSE</name>
<sequence length="1000" mass="113094">MLEARVDMLSSNMIISGPAADLGAKEASRPWKKQLNSVPNSGPSARARAQPQPLSIKDKISKWEGKKEPPASDPARQTDGQEDHLPSCKVERRGSELTRTKNGMRLETERLQNDSRARTVCQDTEQLPGPRPIDGQPELSQHRGRELKPSDLRFQSDHLSVLRQVKRLEKALKDGSAGLDPQMPGTCYSPHCLPDKTEEDLPSLESHEKGGVLAAGRRAHHLEVREPGPEISEDWKGQESVYRGSRWYPPKPFINPVPKPRRTFKHAGEGDKDVSPGISFKKEKRNLPPLPSLPPPPPPLPSSPPPTSVNRRLWTGRQRPSADHRKSYEFEDLLQSSSENSRVDWYAQTKLGLTRTLSEENVYEDILDPPMKENPYEDVELHGRCLGKKCVLTFPASPTSSIPDTSTKQSLSKSAFFRQNSERRNLKLLDTRKLSRDGAGSPLRTSPPSTPSSPDDTFFNLGDLQNGRKKKKIPRLVLRINAIYEARRGKKRVKRLSQSTESNSGKVTDENSESDSDTEEKLKAHSQRLVNVKSRLKQAPRYSSLDRDLIEYQERQLFEYFVVVSLHKKQAGAAYVPELTQQFPLKLEKSFKFMREAEDQLKAIPQFCFPDAKDWAPVQEFTSETFSFVLTGEDGSRRFGYCRRLLPGGKGKRLPEVYCIVSRLGCFSLFSKILDEVEKRRGISPALVQPLMRSVMEAPFPALGKTIIVKNFLPGSGTEVIELCRPLDSRLEHVDFESLFSSLSVRHLVSVFASLLLERRVIFIADKLSTLSKCCHAMVALIYPFSWQHTYIPVLPPAMIDIVCSPTPFLIGLLSSSLPLLRELPLEEVLVVDLINDRFLRQMEDEDSILPRKLQVALEHILEQRNDLACDQDGGPLDCVHGPESSSLSEVVSEAFVRFFVEIVGHYPLFLTSGEERSLQREAFRKAVSSKSLRRFLEVFMETQTFRGFIQERELRRQDAKGLFEVRAQEYLETLPSGEHSGVNKFLKGLGNKMKFLHKK</sequence>
<feature type="chain" id="PRO_0000242683" description="DENN domain-containing protein 2A">
    <location>
        <begin position="1"/>
        <end position="1000"/>
    </location>
</feature>
<feature type="domain" description="uDENN" evidence="2">
    <location>
        <begin position="559"/>
        <end position="708"/>
    </location>
</feature>
<feature type="domain" description="cDENN" evidence="2">
    <location>
        <begin position="730"/>
        <end position="863"/>
    </location>
</feature>
<feature type="domain" description="dDENN" evidence="2">
    <location>
        <begin position="865"/>
        <end position="960"/>
    </location>
</feature>
<feature type="region of interest" description="Disordered" evidence="3">
    <location>
        <begin position="1"/>
        <end position="155"/>
    </location>
</feature>
<feature type="region of interest" description="Disordered" evidence="3">
    <location>
        <begin position="174"/>
        <end position="328"/>
    </location>
</feature>
<feature type="region of interest" description="Disordered" evidence="3">
    <location>
        <begin position="427"/>
        <end position="464"/>
    </location>
</feature>
<feature type="region of interest" description="Disordered" evidence="3">
    <location>
        <begin position="491"/>
        <end position="525"/>
    </location>
</feature>
<feature type="compositionally biased region" description="Polar residues" evidence="3">
    <location>
        <begin position="34"/>
        <end position="43"/>
    </location>
</feature>
<feature type="compositionally biased region" description="Basic and acidic residues" evidence="3">
    <location>
        <begin position="56"/>
        <end position="70"/>
    </location>
</feature>
<feature type="compositionally biased region" description="Basic and acidic residues" evidence="3">
    <location>
        <begin position="79"/>
        <end position="117"/>
    </location>
</feature>
<feature type="compositionally biased region" description="Basic and acidic residues" evidence="3">
    <location>
        <begin position="140"/>
        <end position="155"/>
    </location>
</feature>
<feature type="compositionally biased region" description="Basic and acidic residues" evidence="3">
    <location>
        <begin position="221"/>
        <end position="237"/>
    </location>
</feature>
<feature type="compositionally biased region" description="Pro residues" evidence="3">
    <location>
        <begin position="249"/>
        <end position="258"/>
    </location>
</feature>
<feature type="compositionally biased region" description="Pro residues" evidence="3">
    <location>
        <begin position="288"/>
        <end position="307"/>
    </location>
</feature>
<feature type="compositionally biased region" description="Basic and acidic residues" evidence="3">
    <location>
        <begin position="427"/>
        <end position="436"/>
    </location>
</feature>
<feature type="compositionally biased region" description="Polar residues" evidence="3">
    <location>
        <begin position="496"/>
        <end position="506"/>
    </location>
</feature>
<feature type="modified residue" description="Phosphoserine" evidence="5">
    <location>
        <position position="544"/>
    </location>
</feature>
<feature type="sequence conflict" description="In Ref. 1; BAE36008." evidence="4" ref="1">
    <original>K</original>
    <variation>E</variation>
    <location>
        <position position="67"/>
    </location>
</feature>
<feature type="sequence conflict" description="In Ref. 1; BAE39403." evidence="4" ref="1">
    <original>Q</original>
    <variation>L</variation>
    <location>
        <position position="122"/>
    </location>
</feature>
<feature type="sequence conflict" description="In Ref. 1; BAE39403." evidence="4" ref="1">
    <original>K</original>
    <variation>E</variation>
    <location>
        <position position="523"/>
    </location>
</feature>
<feature type="sequence conflict" description="In Ref. 1; BAE22660." evidence="4" ref="1">
    <original>A</original>
    <variation>V</variation>
    <location>
        <position position="612"/>
    </location>
</feature>
<feature type="sequence conflict" description="In Ref. 1; BAE39403." evidence="4" ref="1">
    <original>E</original>
    <variation>G</variation>
    <location>
        <position position="620"/>
    </location>
</feature>
<feature type="sequence conflict" description="In Ref. 1; BAE22660." evidence="4" ref="1">
    <original>A</original>
    <variation>P</variation>
    <location>
        <position position="698"/>
    </location>
</feature>
<reference key="1">
    <citation type="journal article" date="2005" name="Science">
        <title>The transcriptional landscape of the mammalian genome.</title>
        <authorList>
            <person name="Carninci P."/>
            <person name="Kasukawa T."/>
            <person name="Katayama S."/>
            <person name="Gough J."/>
            <person name="Frith M.C."/>
            <person name="Maeda N."/>
            <person name="Oyama R."/>
            <person name="Ravasi T."/>
            <person name="Lenhard B."/>
            <person name="Wells C."/>
            <person name="Kodzius R."/>
            <person name="Shimokawa K."/>
            <person name="Bajic V.B."/>
            <person name="Brenner S.E."/>
            <person name="Batalov S."/>
            <person name="Forrest A.R."/>
            <person name="Zavolan M."/>
            <person name="Davis M.J."/>
            <person name="Wilming L.G."/>
            <person name="Aidinis V."/>
            <person name="Allen J.E."/>
            <person name="Ambesi-Impiombato A."/>
            <person name="Apweiler R."/>
            <person name="Aturaliya R.N."/>
            <person name="Bailey T.L."/>
            <person name="Bansal M."/>
            <person name="Baxter L."/>
            <person name="Beisel K.W."/>
            <person name="Bersano T."/>
            <person name="Bono H."/>
            <person name="Chalk A.M."/>
            <person name="Chiu K.P."/>
            <person name="Choudhary V."/>
            <person name="Christoffels A."/>
            <person name="Clutterbuck D.R."/>
            <person name="Crowe M.L."/>
            <person name="Dalla E."/>
            <person name="Dalrymple B.P."/>
            <person name="de Bono B."/>
            <person name="Della Gatta G."/>
            <person name="di Bernardo D."/>
            <person name="Down T."/>
            <person name="Engstrom P."/>
            <person name="Fagiolini M."/>
            <person name="Faulkner G."/>
            <person name="Fletcher C.F."/>
            <person name="Fukushima T."/>
            <person name="Furuno M."/>
            <person name="Futaki S."/>
            <person name="Gariboldi M."/>
            <person name="Georgii-Hemming P."/>
            <person name="Gingeras T.R."/>
            <person name="Gojobori T."/>
            <person name="Green R.E."/>
            <person name="Gustincich S."/>
            <person name="Harbers M."/>
            <person name="Hayashi Y."/>
            <person name="Hensch T.K."/>
            <person name="Hirokawa N."/>
            <person name="Hill D."/>
            <person name="Huminiecki L."/>
            <person name="Iacono M."/>
            <person name="Ikeo K."/>
            <person name="Iwama A."/>
            <person name="Ishikawa T."/>
            <person name="Jakt M."/>
            <person name="Kanapin A."/>
            <person name="Katoh M."/>
            <person name="Kawasawa Y."/>
            <person name="Kelso J."/>
            <person name="Kitamura H."/>
            <person name="Kitano H."/>
            <person name="Kollias G."/>
            <person name="Krishnan S.P."/>
            <person name="Kruger A."/>
            <person name="Kummerfeld S.K."/>
            <person name="Kurochkin I.V."/>
            <person name="Lareau L.F."/>
            <person name="Lazarevic D."/>
            <person name="Lipovich L."/>
            <person name="Liu J."/>
            <person name="Liuni S."/>
            <person name="McWilliam S."/>
            <person name="Madan Babu M."/>
            <person name="Madera M."/>
            <person name="Marchionni L."/>
            <person name="Matsuda H."/>
            <person name="Matsuzawa S."/>
            <person name="Miki H."/>
            <person name="Mignone F."/>
            <person name="Miyake S."/>
            <person name="Morris K."/>
            <person name="Mottagui-Tabar S."/>
            <person name="Mulder N."/>
            <person name="Nakano N."/>
            <person name="Nakauchi H."/>
            <person name="Ng P."/>
            <person name="Nilsson R."/>
            <person name="Nishiguchi S."/>
            <person name="Nishikawa S."/>
            <person name="Nori F."/>
            <person name="Ohara O."/>
            <person name="Okazaki Y."/>
            <person name="Orlando V."/>
            <person name="Pang K.C."/>
            <person name="Pavan W.J."/>
            <person name="Pavesi G."/>
            <person name="Pesole G."/>
            <person name="Petrovsky N."/>
            <person name="Piazza S."/>
            <person name="Reed J."/>
            <person name="Reid J.F."/>
            <person name="Ring B.Z."/>
            <person name="Ringwald M."/>
            <person name="Rost B."/>
            <person name="Ruan Y."/>
            <person name="Salzberg S.L."/>
            <person name="Sandelin A."/>
            <person name="Schneider C."/>
            <person name="Schoenbach C."/>
            <person name="Sekiguchi K."/>
            <person name="Semple C.A."/>
            <person name="Seno S."/>
            <person name="Sessa L."/>
            <person name="Sheng Y."/>
            <person name="Shibata Y."/>
            <person name="Shimada H."/>
            <person name="Shimada K."/>
            <person name="Silva D."/>
            <person name="Sinclair B."/>
            <person name="Sperling S."/>
            <person name="Stupka E."/>
            <person name="Sugiura K."/>
            <person name="Sultana R."/>
            <person name="Takenaka Y."/>
            <person name="Taki K."/>
            <person name="Tammoja K."/>
            <person name="Tan S.L."/>
            <person name="Tang S."/>
            <person name="Taylor M.S."/>
            <person name="Tegner J."/>
            <person name="Teichmann S.A."/>
            <person name="Ueda H.R."/>
            <person name="van Nimwegen E."/>
            <person name="Verardo R."/>
            <person name="Wei C.L."/>
            <person name="Yagi K."/>
            <person name="Yamanishi H."/>
            <person name="Zabarovsky E."/>
            <person name="Zhu S."/>
            <person name="Zimmer A."/>
            <person name="Hide W."/>
            <person name="Bult C."/>
            <person name="Grimmond S.M."/>
            <person name="Teasdale R.D."/>
            <person name="Liu E.T."/>
            <person name="Brusic V."/>
            <person name="Quackenbush J."/>
            <person name="Wahlestedt C."/>
            <person name="Mattick J.S."/>
            <person name="Hume D.A."/>
            <person name="Kai C."/>
            <person name="Sasaki D."/>
            <person name="Tomaru Y."/>
            <person name="Fukuda S."/>
            <person name="Kanamori-Katayama M."/>
            <person name="Suzuki M."/>
            <person name="Aoki J."/>
            <person name="Arakawa T."/>
            <person name="Iida J."/>
            <person name="Imamura K."/>
            <person name="Itoh M."/>
            <person name="Kato T."/>
            <person name="Kawaji H."/>
            <person name="Kawagashira N."/>
            <person name="Kawashima T."/>
            <person name="Kojima M."/>
            <person name="Kondo S."/>
            <person name="Konno H."/>
            <person name="Nakano K."/>
            <person name="Ninomiya N."/>
            <person name="Nishio T."/>
            <person name="Okada M."/>
            <person name="Plessy C."/>
            <person name="Shibata K."/>
            <person name="Shiraki T."/>
            <person name="Suzuki S."/>
            <person name="Tagami M."/>
            <person name="Waki K."/>
            <person name="Watahiki A."/>
            <person name="Okamura-Oho Y."/>
            <person name="Suzuki H."/>
            <person name="Kawai J."/>
            <person name="Hayashizaki Y."/>
        </authorList>
    </citation>
    <scope>NUCLEOTIDE SEQUENCE [LARGE SCALE MRNA]</scope>
    <source>
        <strain>C57BL/6J</strain>
        <tissue>Cerebellum</tissue>
        <tissue>Head</tissue>
    </source>
</reference>
<reference key="2">
    <citation type="submission" date="2009-01" db="UniProtKB">
        <authorList>
            <person name="Lubec G."/>
            <person name="Sunyer B."/>
            <person name="Chen W.-Q."/>
        </authorList>
    </citation>
    <scope>PROTEIN SEQUENCE OF 210-217</scope>
    <scope>IDENTIFICATION BY MASS SPECTROMETRY</scope>
    <source>
        <strain>OF1</strain>
        <tissue>Hippocampus</tissue>
    </source>
</reference>
<reference key="3">
    <citation type="journal article" date="2010" name="Cell">
        <title>A tissue-specific atlas of mouse protein phosphorylation and expression.</title>
        <authorList>
            <person name="Huttlin E.L."/>
            <person name="Jedrychowski M.P."/>
            <person name="Elias J.E."/>
            <person name="Goswami T."/>
            <person name="Rad R."/>
            <person name="Beausoleil S.A."/>
            <person name="Villen J."/>
            <person name="Haas W."/>
            <person name="Sowa M.E."/>
            <person name="Gygi S.P."/>
        </authorList>
    </citation>
    <scope>PHOSPHORYLATION [LARGE SCALE ANALYSIS] AT SER-544</scope>
    <scope>IDENTIFICATION BY MASS SPECTROMETRY [LARGE SCALE ANALYSIS]</scope>
    <source>
        <tissue>Brown adipose tissue</tissue>
        <tissue>Kidney</tissue>
        <tissue>Lung</tissue>
        <tissue>Spleen</tissue>
    </source>
</reference>
<evidence type="ECO:0000250" key="1"/>
<evidence type="ECO:0000255" key="2">
    <source>
        <dbReference type="PROSITE-ProRule" id="PRU00304"/>
    </source>
</evidence>
<evidence type="ECO:0000256" key="3">
    <source>
        <dbReference type="SAM" id="MobiDB-lite"/>
    </source>
</evidence>
<evidence type="ECO:0000305" key="4"/>
<evidence type="ECO:0007744" key="5">
    <source>
    </source>
</evidence>
<dbReference type="EMBL" id="AK081176">
    <property type="protein sequence ID" value="BAC38157.1"/>
    <property type="molecule type" value="mRNA"/>
</dbReference>
<dbReference type="EMBL" id="AK135781">
    <property type="protein sequence ID" value="BAE22660.1"/>
    <property type="status" value="ALT_INIT"/>
    <property type="molecule type" value="mRNA"/>
</dbReference>
<dbReference type="EMBL" id="AK160784">
    <property type="protein sequence ID" value="BAE36008.1"/>
    <property type="molecule type" value="mRNA"/>
</dbReference>
<dbReference type="EMBL" id="AK167298">
    <property type="protein sequence ID" value="BAE39403.1"/>
    <property type="molecule type" value="mRNA"/>
</dbReference>
<dbReference type="CCDS" id="CCDS20023.1"/>
<dbReference type="RefSeq" id="NP_001404934.1">
    <property type="nucleotide sequence ID" value="NM_001418005.1"/>
</dbReference>
<dbReference type="RefSeq" id="NP_766065.1">
    <property type="nucleotide sequence ID" value="NM_172477.5"/>
</dbReference>
<dbReference type="RefSeq" id="XP_030111156.1">
    <property type="nucleotide sequence ID" value="XM_030255296.2"/>
</dbReference>
<dbReference type="SMR" id="Q8C4S8"/>
<dbReference type="BioGRID" id="229109">
    <property type="interactions" value="3"/>
</dbReference>
<dbReference type="FunCoup" id="Q8C4S8">
    <property type="interactions" value="106"/>
</dbReference>
<dbReference type="STRING" id="10090.ENSMUSP00000045367"/>
<dbReference type="GlyGen" id="Q8C4S8">
    <property type="glycosylation" value="1 site"/>
</dbReference>
<dbReference type="iPTMnet" id="Q8C4S8"/>
<dbReference type="PhosphoSitePlus" id="Q8C4S8"/>
<dbReference type="jPOST" id="Q8C4S8"/>
<dbReference type="PaxDb" id="10090-ENSMUSP00000045367"/>
<dbReference type="ProteomicsDB" id="279369"/>
<dbReference type="Pumba" id="Q8C4S8"/>
<dbReference type="Antibodypedia" id="32452">
    <property type="antibodies" value="33 antibodies from 12 providers"/>
</dbReference>
<dbReference type="DNASU" id="209773"/>
<dbReference type="Ensembl" id="ENSMUST00000036877.10">
    <property type="protein sequence ID" value="ENSMUSP00000045367.4"/>
    <property type="gene ID" value="ENSMUSG00000038456.10"/>
</dbReference>
<dbReference type="GeneID" id="209773"/>
<dbReference type="KEGG" id="mmu:209773"/>
<dbReference type="UCSC" id="uc009blx.1">
    <property type="organism name" value="mouse"/>
</dbReference>
<dbReference type="AGR" id="MGI:2444961"/>
<dbReference type="CTD" id="27147"/>
<dbReference type="MGI" id="MGI:2444961">
    <property type="gene designation" value="Dennd2a"/>
</dbReference>
<dbReference type="VEuPathDB" id="HostDB:ENSMUSG00000038456"/>
<dbReference type="eggNOG" id="KOG3569">
    <property type="taxonomic scope" value="Eukaryota"/>
</dbReference>
<dbReference type="GeneTree" id="ENSGT00950000182931"/>
<dbReference type="HOGENOM" id="CLU_008960_1_1_1"/>
<dbReference type="InParanoid" id="Q8C4S8"/>
<dbReference type="OMA" id="CPAYVPL"/>
<dbReference type="OrthoDB" id="10266080at2759"/>
<dbReference type="PhylomeDB" id="Q8C4S8"/>
<dbReference type="TreeFam" id="TF320336"/>
<dbReference type="Reactome" id="R-MMU-8876198">
    <property type="pathway name" value="RAB GEFs exchange GTP for GDP on RABs"/>
</dbReference>
<dbReference type="BioGRID-ORCS" id="209773">
    <property type="hits" value="9 hits in 76 CRISPR screens"/>
</dbReference>
<dbReference type="ChiTaRS" id="Dennd2a">
    <property type="organism name" value="mouse"/>
</dbReference>
<dbReference type="PRO" id="PR:Q8C4S8"/>
<dbReference type="Proteomes" id="UP000000589">
    <property type="component" value="Chromosome 6"/>
</dbReference>
<dbReference type="RNAct" id="Q8C4S8">
    <property type="molecule type" value="protein"/>
</dbReference>
<dbReference type="Bgee" id="ENSMUSG00000038456">
    <property type="expression patterns" value="Expressed in floor plate of midbrain and 191 other cell types or tissues"/>
</dbReference>
<dbReference type="ExpressionAtlas" id="Q8C4S8">
    <property type="expression patterns" value="baseline and differential"/>
</dbReference>
<dbReference type="GO" id="GO:0015629">
    <property type="term" value="C:actin cytoskeleton"/>
    <property type="evidence" value="ECO:0000250"/>
    <property type="project" value="UniProtKB"/>
</dbReference>
<dbReference type="GO" id="GO:0005829">
    <property type="term" value="C:cytosol"/>
    <property type="evidence" value="ECO:0007669"/>
    <property type="project" value="GOC"/>
</dbReference>
<dbReference type="GO" id="GO:0005085">
    <property type="term" value="F:guanyl-nucleotide exchange factor activity"/>
    <property type="evidence" value="ECO:0000250"/>
    <property type="project" value="UniProtKB"/>
</dbReference>
<dbReference type="GO" id="GO:0015031">
    <property type="term" value="P:protein transport"/>
    <property type="evidence" value="ECO:0007669"/>
    <property type="project" value="UniProtKB-KW"/>
</dbReference>
<dbReference type="GO" id="GO:0042147">
    <property type="term" value="P:retrograde transport, endosome to Golgi"/>
    <property type="evidence" value="ECO:0000250"/>
    <property type="project" value="UniProtKB"/>
</dbReference>
<dbReference type="FunFam" id="3.30.450.200:FF:000001">
    <property type="entry name" value="DENN domain-containing protein 2A isoform X1"/>
    <property type="match status" value="1"/>
</dbReference>
<dbReference type="FunFam" id="3.40.50.11500:FF:000004">
    <property type="entry name" value="DENN domain-containing protein 2C isoform X1"/>
    <property type="match status" value="1"/>
</dbReference>
<dbReference type="Gene3D" id="3.30.450.200">
    <property type="match status" value="1"/>
</dbReference>
<dbReference type="Gene3D" id="3.40.50.11500">
    <property type="match status" value="1"/>
</dbReference>
<dbReference type="InterPro" id="IPR001194">
    <property type="entry name" value="cDENN_dom"/>
</dbReference>
<dbReference type="InterPro" id="IPR005112">
    <property type="entry name" value="dDENN_dom"/>
</dbReference>
<dbReference type="InterPro" id="IPR043153">
    <property type="entry name" value="DENN_C"/>
</dbReference>
<dbReference type="InterPro" id="IPR051942">
    <property type="entry name" value="DENN_domain_containing_2"/>
</dbReference>
<dbReference type="InterPro" id="IPR037516">
    <property type="entry name" value="Tripartite_DENN"/>
</dbReference>
<dbReference type="InterPro" id="IPR005113">
    <property type="entry name" value="uDENN_dom"/>
</dbReference>
<dbReference type="PANTHER" id="PTHR15288">
    <property type="entry name" value="DENN DOMAIN-CONTAINING PROTEIN 2"/>
    <property type="match status" value="1"/>
</dbReference>
<dbReference type="PANTHER" id="PTHR15288:SF3">
    <property type="entry name" value="DENN DOMAIN-CONTAINING PROTEIN 2A"/>
    <property type="match status" value="1"/>
</dbReference>
<dbReference type="Pfam" id="PF03455">
    <property type="entry name" value="dDENN"/>
    <property type="match status" value="1"/>
</dbReference>
<dbReference type="Pfam" id="PF02141">
    <property type="entry name" value="DENN"/>
    <property type="match status" value="1"/>
</dbReference>
<dbReference type="Pfam" id="PF03456">
    <property type="entry name" value="uDENN"/>
    <property type="match status" value="1"/>
</dbReference>
<dbReference type="SMART" id="SM00801">
    <property type="entry name" value="dDENN"/>
    <property type="match status" value="1"/>
</dbReference>
<dbReference type="SMART" id="SM00799">
    <property type="entry name" value="DENN"/>
    <property type="match status" value="1"/>
</dbReference>
<dbReference type="SMART" id="SM00800">
    <property type="entry name" value="uDENN"/>
    <property type="match status" value="1"/>
</dbReference>
<dbReference type="PROSITE" id="PS50211">
    <property type="entry name" value="DENN"/>
    <property type="match status" value="1"/>
</dbReference>
<gene>
    <name type="primary">Dennd2a</name>
</gene>
<organism>
    <name type="scientific">Mus musculus</name>
    <name type="common">Mouse</name>
    <dbReference type="NCBI Taxonomy" id="10090"/>
    <lineage>
        <taxon>Eukaryota</taxon>
        <taxon>Metazoa</taxon>
        <taxon>Chordata</taxon>
        <taxon>Craniata</taxon>
        <taxon>Vertebrata</taxon>
        <taxon>Euteleostomi</taxon>
        <taxon>Mammalia</taxon>
        <taxon>Eutheria</taxon>
        <taxon>Euarchontoglires</taxon>
        <taxon>Glires</taxon>
        <taxon>Rodentia</taxon>
        <taxon>Myomorpha</taxon>
        <taxon>Muroidea</taxon>
        <taxon>Muridae</taxon>
        <taxon>Murinae</taxon>
        <taxon>Mus</taxon>
        <taxon>Mus</taxon>
    </lineage>
</organism>
<comment type="function">
    <text evidence="1">Guanine nucleotide exchange factor (GEF) which may activate RAB9A and RAB9B. Promotes the exchange of GDP to GTP, converting inactive GDP-bound Rab proteins into their active GTP-bound form. May play a role in late endosomes back to trans-Golgi network/TGN transport (By similarity).</text>
</comment>
<comment type="subcellular location">
    <subcellularLocation>
        <location evidence="1">Cytoplasm</location>
        <location evidence="1">Cytoskeleton</location>
    </subcellularLocation>
    <text evidence="1">Associated with actin filaments.</text>
</comment>
<comment type="sequence caution" evidence="4">
    <conflict type="erroneous initiation">
        <sequence resource="EMBL-CDS" id="BAE22660"/>
    </conflict>
</comment>
<accession>Q8C4S8</accession>
<accession>Q3TJU2</accession>
<accession>Q3TUG3</accession>
<accession>Q3UXA3</accession>
<proteinExistence type="evidence at protein level"/>
<keyword id="KW-0963">Cytoplasm</keyword>
<keyword id="KW-0206">Cytoskeleton</keyword>
<keyword id="KW-0903">Direct protein sequencing</keyword>
<keyword id="KW-0344">Guanine-nucleotide releasing factor</keyword>
<keyword id="KW-0597">Phosphoprotein</keyword>
<keyword id="KW-0653">Protein transport</keyword>
<keyword id="KW-1185">Reference proteome</keyword>
<keyword id="KW-0813">Transport</keyword>
<protein>
    <recommendedName>
        <fullName>DENN domain-containing protein 2A</fullName>
    </recommendedName>
</protein>